<evidence type="ECO:0000255" key="1"/>
<evidence type="ECO:0000269" key="2">
    <source>
    </source>
</evidence>
<evidence type="ECO:0000305" key="3"/>
<gene>
    <name type="primary">VPS60</name>
    <name type="ORF">PF14_0397</name>
    <name type="ORF">PF3D7_1441800</name>
</gene>
<feature type="chain" id="PRO_0000371258" description="Putative vacuolar protein sorting-associated protein 60">
    <location>
        <begin position="1"/>
        <end position="229"/>
    </location>
</feature>
<feature type="coiled-coil region" evidence="1">
    <location>
        <begin position="16"/>
        <end position="78"/>
    </location>
</feature>
<reference key="1">
    <citation type="journal article" date="2002" name="Nature">
        <title>Genome sequence of the human malaria parasite Plasmodium falciparum.</title>
        <authorList>
            <person name="Gardner M.J."/>
            <person name="Hall N."/>
            <person name="Fung E."/>
            <person name="White O."/>
            <person name="Berriman M."/>
            <person name="Hyman R.W."/>
            <person name="Carlton J.M."/>
            <person name="Pain A."/>
            <person name="Nelson K.E."/>
            <person name="Bowman S."/>
            <person name="Paulsen I.T."/>
            <person name="James K.D."/>
            <person name="Eisen J.A."/>
            <person name="Rutherford K.M."/>
            <person name="Salzberg S.L."/>
            <person name="Craig A."/>
            <person name="Kyes S."/>
            <person name="Chan M.-S."/>
            <person name="Nene V."/>
            <person name="Shallom S.J."/>
            <person name="Suh B."/>
            <person name="Peterson J."/>
            <person name="Angiuoli S."/>
            <person name="Pertea M."/>
            <person name="Allen J."/>
            <person name="Selengut J."/>
            <person name="Haft D."/>
            <person name="Mather M.W."/>
            <person name="Vaidya A.B."/>
            <person name="Martin D.M.A."/>
            <person name="Fairlamb A.H."/>
            <person name="Fraunholz M.J."/>
            <person name="Roos D.S."/>
            <person name="Ralph S.A."/>
            <person name="McFadden G.I."/>
            <person name="Cummings L.M."/>
            <person name="Subramanian G.M."/>
            <person name="Mungall C."/>
            <person name="Venter J.C."/>
            <person name="Carucci D.J."/>
            <person name="Hoffman S.L."/>
            <person name="Newbold C."/>
            <person name="Davis R.W."/>
            <person name="Fraser C.M."/>
            <person name="Barrell B.G."/>
        </authorList>
    </citation>
    <scope>NUCLEOTIDE SEQUENCE [LARGE SCALE GENOMIC DNA]</scope>
    <source>
        <strain>3D7</strain>
    </source>
</reference>
<reference evidence="3" key="2">
    <citation type="journal article" date="2007" name="PLoS ONE">
        <title>Rapid identification of malaria vaccine candidates based on alpha-helical coiled coil protein motif.</title>
        <authorList>
            <person name="Villard V."/>
            <person name="Agak G.W."/>
            <person name="Frank G."/>
            <person name="Jafarshad A."/>
            <person name="Servis C."/>
            <person name="Nebie I."/>
            <person name="Sirima S.B."/>
            <person name="Felger I."/>
            <person name="Arevalo-Herrera M."/>
            <person name="Herrera S."/>
            <person name="Heitz F."/>
            <person name="Baecker V."/>
            <person name="Druilhe P."/>
            <person name="Kajava A.V."/>
            <person name="Corradin G."/>
        </authorList>
    </citation>
    <scope>SYNTHESIS OF 17-45</scope>
    <scope>POSSIBLE CANDIDATE MALARIA EPITOPE</scope>
</reference>
<keyword id="KW-0175">Coiled coil</keyword>
<keyword id="KW-0477">Merozoite</keyword>
<keyword id="KW-1185">Reference proteome</keyword>
<protein>
    <recommendedName>
        <fullName evidence="3">Putative vacuolar protein sorting-associated protein 60</fullName>
    </recommendedName>
</protein>
<dbReference type="EMBL" id="LN999946">
    <property type="protein sequence ID" value="CZU00114.1"/>
    <property type="molecule type" value="Genomic_DNA"/>
</dbReference>
<dbReference type="RefSeq" id="XP_001348571.2">
    <property type="nucleotide sequence ID" value="XM_001348535.2"/>
</dbReference>
<dbReference type="SMR" id="Q8IL52"/>
<dbReference type="FunCoup" id="Q8IL52">
    <property type="interactions" value="285"/>
</dbReference>
<dbReference type="STRING" id="36329.Q8IL52"/>
<dbReference type="PaxDb" id="5833-PF14_0397"/>
<dbReference type="EnsemblProtists" id="CZU00114">
    <property type="protein sequence ID" value="CZU00114"/>
    <property type="gene ID" value="PF3D7_1441800"/>
</dbReference>
<dbReference type="GeneID" id="811979"/>
<dbReference type="KEGG" id="pfa:PF3D7_1441800"/>
<dbReference type="VEuPathDB" id="PlasmoDB:PF3D7_1441800"/>
<dbReference type="HOGENOM" id="CLU_1211870_0_0_1"/>
<dbReference type="InParanoid" id="Q8IL52"/>
<dbReference type="OMA" id="GVKQMQK"/>
<dbReference type="OrthoDB" id="3973241at2759"/>
<dbReference type="PhylomeDB" id="Q8IL52"/>
<dbReference type="Proteomes" id="UP000001450">
    <property type="component" value="Chromosome 14"/>
</dbReference>
<dbReference type="GO" id="GO:0005771">
    <property type="term" value="C:multivesicular body"/>
    <property type="evidence" value="ECO:0000318"/>
    <property type="project" value="GO_Central"/>
</dbReference>
<dbReference type="GO" id="GO:0032511">
    <property type="term" value="P:late endosome to vacuole transport via multivesicular body sorting pathway"/>
    <property type="evidence" value="ECO:0000318"/>
    <property type="project" value="GO_Central"/>
</dbReference>
<dbReference type="GO" id="GO:0006900">
    <property type="term" value="P:vesicle budding from membrane"/>
    <property type="evidence" value="ECO:0000318"/>
    <property type="project" value="GO_Central"/>
</dbReference>
<dbReference type="Gene3D" id="6.10.250.1710">
    <property type="match status" value="1"/>
</dbReference>
<dbReference type="InterPro" id="IPR005024">
    <property type="entry name" value="Snf7_fam"/>
</dbReference>
<dbReference type="PANTHER" id="PTHR22761">
    <property type="entry name" value="CHARGED MULTIVESICULAR BODY PROTEIN"/>
    <property type="match status" value="1"/>
</dbReference>
<dbReference type="PANTHER" id="PTHR22761:SF12">
    <property type="entry name" value="CHARGED MULTIVESICULAR BODY PROTEIN 5"/>
    <property type="match status" value="1"/>
</dbReference>
<dbReference type="Pfam" id="PF03357">
    <property type="entry name" value="Snf7"/>
    <property type="match status" value="1"/>
</dbReference>
<proteinExistence type="evidence at protein level"/>
<sequence>MKFFKGKKDKTLDEAYDTLEKSVKGIDENIEKYNKELNVIKQKIEEEKKKNPINQHIINSLRNKAANIIQKKKVYENNKESTMGIQFNIDQIKYANDNVQLSIDTYKALKNTSKVLKKNIKKVNINKIEKLQDDLFDYIEDTKEIGNILSSSYDIPLNLDEQEIDAELALIEDSILDENVEQDNIASYIEDDKKEEDKNLLQQIPVEEKNFDAIQQKTKKETYFAQKES</sequence>
<organism>
    <name type="scientific">Plasmodium falciparum (isolate 3D7)</name>
    <dbReference type="NCBI Taxonomy" id="36329"/>
    <lineage>
        <taxon>Eukaryota</taxon>
        <taxon>Sar</taxon>
        <taxon>Alveolata</taxon>
        <taxon>Apicomplexa</taxon>
        <taxon>Aconoidasida</taxon>
        <taxon>Haemosporida</taxon>
        <taxon>Plasmodiidae</taxon>
        <taxon>Plasmodium</taxon>
        <taxon>Plasmodium (Laverania)</taxon>
    </lineage>
</organism>
<name>YSNF1_PLAF7</name>
<accession>Q8IL52</accession>
<accession>A0A144A3Q5</accession>
<comment type="biotechnology">
    <text evidence="2">Possible candidate for an effective malaria vaccine as determined by epitope response in sera.</text>
</comment>
<comment type="similarity">
    <text evidence="1">Belongs to the SNF7 family.</text>
</comment>